<reference key="1">
    <citation type="journal article" date="2015" name="Genome Announc.">
        <title>Genome sequence of Aspergillus flavus NRRL 3357, a strain that causes aflatoxin contamination of food and feed.</title>
        <authorList>
            <person name="Nierman W.C."/>
            <person name="Yu J."/>
            <person name="Fedorova-Abrams N.D."/>
            <person name="Losada L."/>
            <person name="Cleveland T.E."/>
            <person name="Bhatnagar D."/>
            <person name="Bennett J.W."/>
            <person name="Dean R."/>
            <person name="Payne G.A."/>
        </authorList>
    </citation>
    <scope>NUCLEOTIDE SEQUENCE [LARGE SCALE GENOMIC DNA]</scope>
    <source>
        <strain>ATCC 200026 / FGSC A1120 / IAM 13836 / NRRL 3357 / JCM 12722 / SRRC 167</strain>
    </source>
</reference>
<keyword id="KW-0256">Endoplasmic reticulum</keyword>
<keyword id="KW-0445">Lipid transport</keyword>
<keyword id="KW-0446">Lipid-binding</keyword>
<keyword id="KW-0472">Membrane</keyword>
<keyword id="KW-0496">Mitochondrion</keyword>
<keyword id="KW-1000">Mitochondrion outer membrane</keyword>
<keyword id="KW-0813">Transport</keyword>
<gene>
    <name evidence="1" type="primary">mdm12</name>
    <name type="ORF">AFLA_084880</name>
</gene>
<accession>B8MZJ8</accession>
<feature type="chain" id="PRO_0000384269" description="Mitochondrial distribution and morphology protein 12">
    <location>
        <begin position="1"/>
        <end position="432"/>
    </location>
</feature>
<feature type="domain" description="SMP-LTD" evidence="1">
    <location>
        <begin position="1"/>
        <end position="432"/>
    </location>
</feature>
<feature type="region of interest" description="Disordered" evidence="2">
    <location>
        <begin position="182"/>
        <end position="273"/>
    </location>
</feature>
<feature type="region of interest" description="Disordered" evidence="2">
    <location>
        <begin position="354"/>
        <end position="377"/>
    </location>
</feature>
<feature type="compositionally biased region" description="Low complexity" evidence="2">
    <location>
        <begin position="214"/>
        <end position="234"/>
    </location>
</feature>
<feature type="compositionally biased region" description="Basic and acidic residues" evidence="2">
    <location>
        <begin position="243"/>
        <end position="253"/>
    </location>
</feature>
<feature type="compositionally biased region" description="Basic and acidic residues" evidence="2">
    <location>
        <begin position="355"/>
        <end position="364"/>
    </location>
</feature>
<name>MDM12_ASPFN</name>
<evidence type="ECO:0000255" key="1">
    <source>
        <dbReference type="HAMAP-Rule" id="MF_03104"/>
    </source>
</evidence>
<evidence type="ECO:0000256" key="2">
    <source>
        <dbReference type="SAM" id="MobiDB-lite"/>
    </source>
</evidence>
<comment type="function">
    <text evidence="1">Component of the ERMES/MDM complex, which serves as a molecular tether to connect the endoplasmic reticulum (ER) and mitochondria. Components of this complex are involved in the control of mitochondrial shape and protein biogenesis, and function in nonvesicular lipid trafficking between the ER and mitochondria. Mdm12 is required for the interaction of the ER-resident membrane protein MMM1 and the outer mitochondrial membrane-resident beta-barrel protein mdm10. The mdm12-mmm1 subcomplex functions in the major beta-barrel assembly pathway that is responsible for biogenesis of all mitochondrial outer membrane beta-barrel proteins, and acts in a late step after the SAM complex. The mdm10-mdm12-mmm1 subcomplex further acts in the TOM40-specific pathway after the action of the mdm12-mmm1 complex. Essential for establishing and maintaining the structure of mitochondria and maintenance of mtDNA nucleoids.</text>
</comment>
<comment type="subunit">
    <text evidence="1">Component of the ER-mitochondria encounter structure (ERMES) or MDM complex, composed of mmm1, mdm10, mdm12 and mdm34. A mmm1 homodimer associates with one molecule of mdm12 on each side in a pairwise head-to-tail manner, and the SMP-LTD domains of mmm1 and mdm12 generate a continuous hydrophobic tunnel for phospholipid trafficking.</text>
</comment>
<comment type="subcellular location">
    <subcellularLocation>
        <location evidence="1">Mitochondrion outer membrane</location>
        <topology evidence="1">Peripheral membrane protein</topology>
        <orientation evidence="1">Cytoplasmic side</orientation>
    </subcellularLocation>
    <subcellularLocation>
        <location evidence="1">Endoplasmic reticulum membrane</location>
        <topology evidence="1">Peripheral membrane protein</topology>
        <orientation evidence="1">Cytoplasmic side</orientation>
    </subcellularLocation>
    <text evidence="1">The ERMES/MDM complex localizes to a few discrete foci (around 10 per single cell), that represent mitochondria-endoplasmic reticulum junctions. These foci are often found next to mtDNA nucleoids.</text>
</comment>
<comment type="domain">
    <text evidence="1">The SMP-LTD domain is a barrel-like domain that can bind various types of glycerophospholipids in its interior and mediate their transfer between two adjacent bilayers.</text>
</comment>
<comment type="similarity">
    <text evidence="1">Belongs to the MDM12 family.</text>
</comment>
<proteinExistence type="inferred from homology"/>
<sequence length="432" mass="47586">MSIEVDWRAATSGPDGEALAERIRSFIHDKFQQVALPRFIRSVQVHSFDFGTIPPDLEVKDICEPFADFYEEDEDDETSDVSEELVSGHGTQWHRDLNEPPFHEEMAMNRPLRDPFDEAFHSSTLRSPMEHLNPHFLPRAGTPGIPGGTSTLGYHLMSLGGLSGTQTPLAAVAGGTPFANGWTDPGMGASSRGHPSISGPTAVHPSRMEADIDTSNPTSRPSTSSTLPSHPSASNQPSGDATTGKEHGSLAEDEHLDDPMTSGHPLRLPPRMRERRPEDFQVLCHAKYAGDVRLSLTAEILLDYPMPSFVGLPLKLNVTGITFDGVAVIAYIRKRVHFCFLSAEDADALIGSDQQEARGQDDRPWSSADPTASPKRQGGLLREIRVESEIGRKEDGKQVLKNVGKVERFVLAQVRRIFEEEMVFPSFWTFLI</sequence>
<dbReference type="EMBL" id="EQ963472">
    <property type="protein sequence ID" value="EED57790.1"/>
    <property type="molecule type" value="Genomic_DNA"/>
</dbReference>
<dbReference type="RefSeq" id="XP_002373402.1">
    <property type="nucleotide sequence ID" value="XM_002373361.1"/>
</dbReference>
<dbReference type="SMR" id="B8MZJ8"/>
<dbReference type="STRING" id="332952.B8MZJ8"/>
<dbReference type="EnsemblFungi" id="EED57790">
    <property type="protein sequence ID" value="EED57790"/>
    <property type="gene ID" value="AFLA_084880"/>
</dbReference>
<dbReference type="VEuPathDB" id="FungiDB:AFLA_004073"/>
<dbReference type="eggNOG" id="ENOG502S3PB">
    <property type="taxonomic scope" value="Eukaryota"/>
</dbReference>
<dbReference type="HOGENOM" id="CLU_026794_0_0_1"/>
<dbReference type="OMA" id="KRAHFCF"/>
<dbReference type="GO" id="GO:0005789">
    <property type="term" value="C:endoplasmic reticulum membrane"/>
    <property type="evidence" value="ECO:0007669"/>
    <property type="project" value="UniProtKB-SubCell"/>
</dbReference>
<dbReference type="GO" id="GO:0032865">
    <property type="term" value="C:ERMES complex"/>
    <property type="evidence" value="ECO:0007669"/>
    <property type="project" value="UniProtKB-UniRule"/>
</dbReference>
<dbReference type="GO" id="GO:0008289">
    <property type="term" value="F:lipid binding"/>
    <property type="evidence" value="ECO:0007669"/>
    <property type="project" value="UniProtKB-KW"/>
</dbReference>
<dbReference type="GO" id="GO:0000002">
    <property type="term" value="P:mitochondrial genome maintenance"/>
    <property type="evidence" value="ECO:0007669"/>
    <property type="project" value="UniProtKB-UniRule"/>
</dbReference>
<dbReference type="GO" id="GO:1990456">
    <property type="term" value="P:mitochondrion-endoplasmic reticulum membrane tethering"/>
    <property type="evidence" value="ECO:0007669"/>
    <property type="project" value="TreeGrafter"/>
</dbReference>
<dbReference type="GO" id="GO:0015914">
    <property type="term" value="P:phospholipid transport"/>
    <property type="evidence" value="ECO:0007669"/>
    <property type="project" value="TreeGrafter"/>
</dbReference>
<dbReference type="GO" id="GO:0045040">
    <property type="term" value="P:protein insertion into mitochondrial outer membrane"/>
    <property type="evidence" value="ECO:0007669"/>
    <property type="project" value="UniProtKB-UniRule"/>
</dbReference>
<dbReference type="CDD" id="cd21672">
    <property type="entry name" value="SMP_Mdm12"/>
    <property type="match status" value="1"/>
</dbReference>
<dbReference type="HAMAP" id="MF_03104">
    <property type="entry name" value="Mdm12"/>
    <property type="match status" value="1"/>
</dbReference>
<dbReference type="InterPro" id="IPR027532">
    <property type="entry name" value="Mdm12"/>
</dbReference>
<dbReference type="InterPro" id="IPR019411">
    <property type="entry name" value="MMM1_dom"/>
</dbReference>
<dbReference type="InterPro" id="IPR031468">
    <property type="entry name" value="SMP_LBD"/>
</dbReference>
<dbReference type="PANTHER" id="PTHR28204">
    <property type="entry name" value="MITOCHONDRIAL DISTRIBUTION AND MORPHOLOGY PROTEIN 12"/>
    <property type="match status" value="1"/>
</dbReference>
<dbReference type="PANTHER" id="PTHR28204:SF1">
    <property type="entry name" value="MITOCHONDRIAL DISTRIBUTION AND MORPHOLOGY PROTEIN 12"/>
    <property type="match status" value="1"/>
</dbReference>
<dbReference type="Pfam" id="PF10296">
    <property type="entry name" value="MMM1"/>
    <property type="match status" value="1"/>
</dbReference>
<dbReference type="PROSITE" id="PS51847">
    <property type="entry name" value="SMP"/>
    <property type="match status" value="1"/>
</dbReference>
<protein>
    <recommendedName>
        <fullName evidence="1">Mitochondrial distribution and morphology protein 12</fullName>
    </recommendedName>
    <alternativeName>
        <fullName evidence="1">Mitochondrial inheritance component MDM12</fullName>
    </alternativeName>
</protein>
<organism>
    <name type="scientific">Aspergillus flavus (strain ATCC 200026 / FGSC A1120 / IAM 13836 / NRRL 3357 / JCM 12722 / SRRC 167)</name>
    <dbReference type="NCBI Taxonomy" id="332952"/>
    <lineage>
        <taxon>Eukaryota</taxon>
        <taxon>Fungi</taxon>
        <taxon>Dikarya</taxon>
        <taxon>Ascomycota</taxon>
        <taxon>Pezizomycotina</taxon>
        <taxon>Eurotiomycetes</taxon>
        <taxon>Eurotiomycetidae</taxon>
        <taxon>Eurotiales</taxon>
        <taxon>Aspergillaceae</taxon>
        <taxon>Aspergillus</taxon>
        <taxon>Aspergillus subgen. Circumdati</taxon>
    </lineage>
</organism>